<feature type="chain" id="PRO_0000269500" description="ATP-dependent Clp protease ATP-binding subunit ClpL">
    <location>
        <begin position="1"/>
        <end position="701"/>
    </location>
</feature>
<feature type="domain" description="UVR">
    <location>
        <begin position="336"/>
        <end position="371"/>
    </location>
</feature>
<feature type="region of interest" description="Disordered" evidence="3">
    <location>
        <begin position="46"/>
        <end position="78"/>
    </location>
</feature>
<feature type="region of interest" description="I">
    <location>
        <begin position="81"/>
        <end position="332"/>
    </location>
</feature>
<feature type="region of interest" description="II">
    <location>
        <begin position="383"/>
        <end position="575"/>
    </location>
</feature>
<feature type="compositionally biased region" description="Polar residues" evidence="3">
    <location>
        <begin position="46"/>
        <end position="55"/>
    </location>
</feature>
<feature type="compositionally biased region" description="Low complexity" evidence="3">
    <location>
        <begin position="56"/>
        <end position="74"/>
    </location>
</feature>
<feature type="binding site" evidence="2">
    <location>
        <begin position="126"/>
        <end position="133"/>
    </location>
    <ligand>
        <name>ATP</name>
        <dbReference type="ChEBI" id="CHEBI:30616"/>
    </ligand>
</feature>
<feature type="binding site" evidence="2">
    <location>
        <begin position="457"/>
        <end position="464"/>
    </location>
    <ligand>
        <name>ATP</name>
        <dbReference type="ChEBI" id="CHEBI:30616"/>
    </ligand>
</feature>
<reference key="1">
    <citation type="journal article" date="2004" name="Proc. Natl. Acad. Sci. U.S.A.">
        <title>Complete genomes of two clinical Staphylococcus aureus strains: evidence for the rapid evolution of virulence and drug resistance.</title>
        <authorList>
            <person name="Holden M.T.G."/>
            <person name="Feil E.J."/>
            <person name="Lindsay J.A."/>
            <person name="Peacock S.J."/>
            <person name="Day N.P.J."/>
            <person name="Enright M.C."/>
            <person name="Foster T.J."/>
            <person name="Moore C.E."/>
            <person name="Hurst L."/>
            <person name="Atkin R."/>
            <person name="Barron A."/>
            <person name="Bason N."/>
            <person name="Bentley S.D."/>
            <person name="Chillingworth C."/>
            <person name="Chillingworth T."/>
            <person name="Churcher C."/>
            <person name="Clark L."/>
            <person name="Corton C."/>
            <person name="Cronin A."/>
            <person name="Doggett J."/>
            <person name="Dowd L."/>
            <person name="Feltwell T."/>
            <person name="Hance Z."/>
            <person name="Harris B."/>
            <person name="Hauser H."/>
            <person name="Holroyd S."/>
            <person name="Jagels K."/>
            <person name="James K.D."/>
            <person name="Lennard N."/>
            <person name="Line A."/>
            <person name="Mayes R."/>
            <person name="Moule S."/>
            <person name="Mungall K."/>
            <person name="Ormond D."/>
            <person name="Quail M.A."/>
            <person name="Rabbinowitsch E."/>
            <person name="Rutherford K.M."/>
            <person name="Sanders M."/>
            <person name="Sharp S."/>
            <person name="Simmonds M."/>
            <person name="Stevens K."/>
            <person name="Whitehead S."/>
            <person name="Barrell B.G."/>
            <person name="Spratt B.G."/>
            <person name="Parkhill J."/>
        </authorList>
    </citation>
    <scope>NUCLEOTIDE SEQUENCE [LARGE SCALE GENOMIC DNA]</scope>
    <source>
        <strain>MRSA252</strain>
    </source>
</reference>
<accession>Q6GDQ0</accession>
<name>CLPL_STAAR</name>
<comment type="function">
    <text evidence="1">Required for the development of induced thermotolerance.</text>
</comment>
<comment type="similarity">
    <text evidence="4">Belongs to the ClpA/ClpB family. ClpL subfamily.</text>
</comment>
<sequence length="701" mass="77984">MNNNFFNSDFDSILRRMMQDMQNSNQTSNKKYYINGKEVSPEELAQFTQQGGNHSAEQSAQAFQQAALRQQGQQSGNGNYLEQIGRNLTQEARDGLLDPVIGRDKEIQETAEVLSRRTKNNPILVGEAGVGKTAIVEGLAQAIVEGNVPAAIKDKEIISIDISSLEAGTQYRGAFEENIQKLVEGVKSSQNAVLFFDEIHQIIGSGATGSDSGSKGLSDILKPALSRGEISIIGATTQDEYRNNIMKDAALTRRFNEVLVNEPSAKDTVEILKGIREKFETHHQVKLPDDVLKACVDLSIQYIPQRLLPDKAIDVLDITAAHLSAQSPAIDKVTTEKRISELEHDKRKAVSAEEYKKADDIQKEIKSLQDKLENSNGEHTAVATVHDISDTIQRLTGIPVSQMDANDIERLKNISSRLRSKIIGQDKAVEMVSRAIRRNRAGFDDGNRPIGSFLFVGPTGVGKTELAKQLAIDLFGNKEALIRLDMSEYSDTTAVSKMIGTTAGYVGYDDNSNTLTEKVRRNPYSVILFDEIEKANPQILTLLLQVMDDGNLTDGQGNVINFKNTIIICTSNAGFGNGNDTEEKDIMHEMKKFFRPEFLNRFNGIVEFLHLDKDALQDIVNLLLDDVQVTLDKKGITMDVSQDAKDWLIEEGYDEELGARPLRRIVEQQVRDKITDYYLDHTDVKHVDIDVEDNELVVKGK</sequence>
<evidence type="ECO:0000250" key="1"/>
<evidence type="ECO:0000255" key="2"/>
<evidence type="ECO:0000256" key="3">
    <source>
        <dbReference type="SAM" id="MobiDB-lite"/>
    </source>
</evidence>
<evidence type="ECO:0000305" key="4"/>
<protein>
    <recommendedName>
        <fullName>ATP-dependent Clp protease ATP-binding subunit ClpL</fullName>
    </recommendedName>
</protein>
<proteinExistence type="inferred from homology"/>
<keyword id="KW-0067">ATP-binding</keyword>
<keyword id="KW-0143">Chaperone</keyword>
<keyword id="KW-0547">Nucleotide-binding</keyword>
<dbReference type="EMBL" id="BX571856">
    <property type="protein sequence ID" value="CAG41607.1"/>
    <property type="molecule type" value="Genomic_DNA"/>
</dbReference>
<dbReference type="RefSeq" id="WP_001063330.1">
    <property type="nucleotide sequence ID" value="NC_002952.2"/>
</dbReference>
<dbReference type="SMR" id="Q6GDQ0"/>
<dbReference type="KEGG" id="sar:SAR2628"/>
<dbReference type="HOGENOM" id="CLU_005070_4_3_9"/>
<dbReference type="Proteomes" id="UP000000596">
    <property type="component" value="Chromosome"/>
</dbReference>
<dbReference type="GO" id="GO:0005737">
    <property type="term" value="C:cytoplasm"/>
    <property type="evidence" value="ECO:0007669"/>
    <property type="project" value="TreeGrafter"/>
</dbReference>
<dbReference type="GO" id="GO:0005524">
    <property type="term" value="F:ATP binding"/>
    <property type="evidence" value="ECO:0007669"/>
    <property type="project" value="UniProtKB-KW"/>
</dbReference>
<dbReference type="GO" id="GO:0016887">
    <property type="term" value="F:ATP hydrolysis activity"/>
    <property type="evidence" value="ECO:0007669"/>
    <property type="project" value="InterPro"/>
</dbReference>
<dbReference type="GO" id="GO:0034605">
    <property type="term" value="P:cellular response to heat"/>
    <property type="evidence" value="ECO:0007669"/>
    <property type="project" value="TreeGrafter"/>
</dbReference>
<dbReference type="CDD" id="cd00009">
    <property type="entry name" value="AAA"/>
    <property type="match status" value="1"/>
</dbReference>
<dbReference type="CDD" id="cd19499">
    <property type="entry name" value="RecA-like_ClpB_Hsp104-like"/>
    <property type="match status" value="1"/>
</dbReference>
<dbReference type="FunFam" id="3.40.50.300:FF:000025">
    <property type="entry name" value="ATP-dependent Clp protease subunit"/>
    <property type="match status" value="1"/>
</dbReference>
<dbReference type="Gene3D" id="1.10.8.60">
    <property type="match status" value="2"/>
</dbReference>
<dbReference type="Gene3D" id="3.40.50.300">
    <property type="entry name" value="P-loop containing nucleotide triphosphate hydrolases"/>
    <property type="match status" value="2"/>
</dbReference>
<dbReference type="Gene3D" id="4.10.860.10">
    <property type="entry name" value="UVR domain"/>
    <property type="match status" value="1"/>
</dbReference>
<dbReference type="InterPro" id="IPR003593">
    <property type="entry name" value="AAA+_ATPase"/>
</dbReference>
<dbReference type="InterPro" id="IPR003959">
    <property type="entry name" value="ATPase_AAA_core"/>
</dbReference>
<dbReference type="InterPro" id="IPR019489">
    <property type="entry name" value="Clp_ATPase_C"/>
</dbReference>
<dbReference type="InterPro" id="IPR001270">
    <property type="entry name" value="ClpA/B"/>
</dbReference>
<dbReference type="InterPro" id="IPR041546">
    <property type="entry name" value="ClpA/ClpB_AAA_lid"/>
</dbReference>
<dbReference type="InterPro" id="IPR050130">
    <property type="entry name" value="ClpA_ClpB"/>
</dbReference>
<dbReference type="InterPro" id="IPR027417">
    <property type="entry name" value="P-loop_NTPase"/>
</dbReference>
<dbReference type="PANTHER" id="PTHR11638">
    <property type="entry name" value="ATP-DEPENDENT CLP PROTEASE"/>
    <property type="match status" value="1"/>
</dbReference>
<dbReference type="PANTHER" id="PTHR11638:SF188">
    <property type="entry name" value="ATP-DEPENDENT CLP PROTEASE ATP-BINDING SUBUNIT CLPL"/>
    <property type="match status" value="1"/>
</dbReference>
<dbReference type="Pfam" id="PF00004">
    <property type="entry name" value="AAA"/>
    <property type="match status" value="1"/>
</dbReference>
<dbReference type="Pfam" id="PF07724">
    <property type="entry name" value="AAA_2"/>
    <property type="match status" value="1"/>
</dbReference>
<dbReference type="Pfam" id="PF17871">
    <property type="entry name" value="AAA_lid_9"/>
    <property type="match status" value="1"/>
</dbReference>
<dbReference type="Pfam" id="PF10431">
    <property type="entry name" value="ClpB_D2-small"/>
    <property type="match status" value="1"/>
</dbReference>
<dbReference type="PRINTS" id="PR00300">
    <property type="entry name" value="CLPPROTEASEA"/>
</dbReference>
<dbReference type="SMART" id="SM00382">
    <property type="entry name" value="AAA"/>
    <property type="match status" value="2"/>
</dbReference>
<dbReference type="SMART" id="SM01086">
    <property type="entry name" value="ClpB_D2-small"/>
    <property type="match status" value="1"/>
</dbReference>
<dbReference type="SUPFAM" id="SSF52540">
    <property type="entry name" value="P-loop containing nucleoside triphosphate hydrolases"/>
    <property type="match status" value="2"/>
</dbReference>
<organism>
    <name type="scientific">Staphylococcus aureus (strain MRSA252)</name>
    <dbReference type="NCBI Taxonomy" id="282458"/>
    <lineage>
        <taxon>Bacteria</taxon>
        <taxon>Bacillati</taxon>
        <taxon>Bacillota</taxon>
        <taxon>Bacilli</taxon>
        <taxon>Bacillales</taxon>
        <taxon>Staphylococcaceae</taxon>
        <taxon>Staphylococcus</taxon>
    </lineage>
</organism>
<gene>
    <name type="primary">clpL</name>
    <name type="ordered locus">SAR2628</name>
</gene>